<feature type="chain" id="PRO_1000190192" description="Glycine cleavage system H protein">
    <location>
        <begin position="1"/>
        <end position="127"/>
    </location>
</feature>
<feature type="domain" description="Lipoyl-binding" evidence="2">
    <location>
        <begin position="22"/>
        <end position="104"/>
    </location>
</feature>
<feature type="modified residue" description="N6-lipoyllysine" evidence="1">
    <location>
        <position position="63"/>
    </location>
</feature>
<accession>B9J3J0</accession>
<gene>
    <name evidence="1" type="primary">gcvH</name>
    <name type="ordered locus">BCQ_4808</name>
</gene>
<sequence>MSIPNNLRYSEEHEWVKTEGNEVVIGITHFAQSELGDIVFVELPEVGATIEADEPFGSVESVKTVSELYAPVSGKVVAVNEELSDQPELVNESPYEGAWMVKVELSDASQVEKLLTAEKYAEMTNQD</sequence>
<organism>
    <name type="scientific">Bacillus cereus (strain Q1)</name>
    <dbReference type="NCBI Taxonomy" id="361100"/>
    <lineage>
        <taxon>Bacteria</taxon>
        <taxon>Bacillati</taxon>
        <taxon>Bacillota</taxon>
        <taxon>Bacilli</taxon>
        <taxon>Bacillales</taxon>
        <taxon>Bacillaceae</taxon>
        <taxon>Bacillus</taxon>
        <taxon>Bacillus cereus group</taxon>
    </lineage>
</organism>
<proteinExistence type="inferred from homology"/>
<protein>
    <recommendedName>
        <fullName evidence="1">Glycine cleavage system H protein</fullName>
    </recommendedName>
    <alternativeName>
        <fullName evidence="1">Octanoyl/lipoyl carrier protein</fullName>
    </alternativeName>
</protein>
<reference key="1">
    <citation type="journal article" date="2009" name="J. Bacteriol.">
        <title>Complete genome sequence of the extremophilic Bacillus cereus strain Q1 with industrial applications.</title>
        <authorList>
            <person name="Xiong Z."/>
            <person name="Jiang Y."/>
            <person name="Qi D."/>
            <person name="Lu H."/>
            <person name="Yang F."/>
            <person name="Yang J."/>
            <person name="Chen L."/>
            <person name="Sun L."/>
            <person name="Xu X."/>
            <person name="Xue Y."/>
            <person name="Zhu Y."/>
            <person name="Jin Q."/>
        </authorList>
    </citation>
    <scope>NUCLEOTIDE SEQUENCE [LARGE SCALE GENOMIC DNA]</scope>
    <source>
        <strain>Q1</strain>
    </source>
</reference>
<dbReference type="EMBL" id="CP000227">
    <property type="protein sequence ID" value="ACM15209.1"/>
    <property type="molecule type" value="Genomic_DNA"/>
</dbReference>
<dbReference type="SMR" id="B9J3J0"/>
<dbReference type="KEGG" id="bcq:BCQ_4808"/>
<dbReference type="HOGENOM" id="CLU_097408_2_2_9"/>
<dbReference type="Proteomes" id="UP000000441">
    <property type="component" value="Chromosome"/>
</dbReference>
<dbReference type="GO" id="GO:0005829">
    <property type="term" value="C:cytosol"/>
    <property type="evidence" value="ECO:0007669"/>
    <property type="project" value="TreeGrafter"/>
</dbReference>
<dbReference type="GO" id="GO:0005960">
    <property type="term" value="C:glycine cleavage complex"/>
    <property type="evidence" value="ECO:0007669"/>
    <property type="project" value="InterPro"/>
</dbReference>
<dbReference type="GO" id="GO:0019464">
    <property type="term" value="P:glycine decarboxylation via glycine cleavage system"/>
    <property type="evidence" value="ECO:0007669"/>
    <property type="project" value="UniProtKB-UniRule"/>
</dbReference>
<dbReference type="CDD" id="cd06848">
    <property type="entry name" value="GCS_H"/>
    <property type="match status" value="1"/>
</dbReference>
<dbReference type="Gene3D" id="2.40.50.100">
    <property type="match status" value="1"/>
</dbReference>
<dbReference type="HAMAP" id="MF_00272">
    <property type="entry name" value="GcvH"/>
    <property type="match status" value="1"/>
</dbReference>
<dbReference type="InterPro" id="IPR003016">
    <property type="entry name" value="2-oxoA_DH_lipoyl-BS"/>
</dbReference>
<dbReference type="InterPro" id="IPR000089">
    <property type="entry name" value="Biotin_lipoyl"/>
</dbReference>
<dbReference type="InterPro" id="IPR002930">
    <property type="entry name" value="GCV_H"/>
</dbReference>
<dbReference type="InterPro" id="IPR033753">
    <property type="entry name" value="GCV_H/Fam206"/>
</dbReference>
<dbReference type="InterPro" id="IPR017453">
    <property type="entry name" value="GCV_H_sub"/>
</dbReference>
<dbReference type="InterPro" id="IPR011053">
    <property type="entry name" value="Single_hybrid_motif"/>
</dbReference>
<dbReference type="NCBIfam" id="TIGR00527">
    <property type="entry name" value="gcvH"/>
    <property type="match status" value="1"/>
</dbReference>
<dbReference type="NCBIfam" id="NF002270">
    <property type="entry name" value="PRK01202.1"/>
    <property type="match status" value="1"/>
</dbReference>
<dbReference type="PANTHER" id="PTHR11715">
    <property type="entry name" value="GLYCINE CLEAVAGE SYSTEM H PROTEIN"/>
    <property type="match status" value="1"/>
</dbReference>
<dbReference type="PANTHER" id="PTHR11715:SF3">
    <property type="entry name" value="GLYCINE CLEAVAGE SYSTEM H PROTEIN-RELATED"/>
    <property type="match status" value="1"/>
</dbReference>
<dbReference type="Pfam" id="PF01597">
    <property type="entry name" value="GCV_H"/>
    <property type="match status" value="1"/>
</dbReference>
<dbReference type="SUPFAM" id="SSF51230">
    <property type="entry name" value="Single hybrid motif"/>
    <property type="match status" value="1"/>
</dbReference>
<dbReference type="PROSITE" id="PS50968">
    <property type="entry name" value="BIOTINYL_LIPOYL"/>
    <property type="match status" value="1"/>
</dbReference>
<dbReference type="PROSITE" id="PS00189">
    <property type="entry name" value="LIPOYL"/>
    <property type="match status" value="1"/>
</dbReference>
<name>GCSH_BACCQ</name>
<comment type="function">
    <text evidence="1">The glycine cleavage system catalyzes the degradation of glycine. The H protein shuttles the methylamine group of glycine from the P protein to the T protein.</text>
</comment>
<comment type="function">
    <text evidence="1">Is also involved in protein lipoylation via its role as an octanoyl/lipoyl carrier protein intermediate.</text>
</comment>
<comment type="cofactor">
    <cofactor evidence="1">
        <name>(R)-lipoate</name>
        <dbReference type="ChEBI" id="CHEBI:83088"/>
    </cofactor>
    <text evidence="1">Binds 1 lipoyl cofactor covalently.</text>
</comment>
<comment type="subunit">
    <text evidence="1">The glycine cleavage system is composed of four proteins: P, T, L and H.</text>
</comment>
<comment type="similarity">
    <text evidence="1">Belongs to the GcvH family.</text>
</comment>
<evidence type="ECO:0000255" key="1">
    <source>
        <dbReference type="HAMAP-Rule" id="MF_00272"/>
    </source>
</evidence>
<evidence type="ECO:0000255" key="2">
    <source>
        <dbReference type="PROSITE-ProRule" id="PRU01066"/>
    </source>
</evidence>
<keyword id="KW-0450">Lipoyl</keyword>